<keyword id="KW-0067">ATP-binding</keyword>
<keyword id="KW-0963">Cytoplasm</keyword>
<keyword id="KW-0418">Kinase</keyword>
<keyword id="KW-0460">Magnesium</keyword>
<keyword id="KW-0479">Metal-binding</keyword>
<keyword id="KW-0547">Nucleotide-binding</keyword>
<keyword id="KW-0597">Phosphoprotein</keyword>
<keyword id="KW-1185">Reference proteome</keyword>
<keyword id="KW-0723">Serine/threonine-protein kinase</keyword>
<keyword id="KW-0346">Stress response</keyword>
<keyword id="KW-0808">Transferase</keyword>
<protein>
    <recommendedName>
        <fullName evidence="1">Stress response kinase A</fullName>
        <ecNumber evidence="1">2.7.11.1</ecNumber>
    </recommendedName>
    <alternativeName>
        <fullName evidence="1">Serine/threonine-protein kinase SrkA</fullName>
    </alternativeName>
</protein>
<name>SRKA_ECO57</name>
<organism>
    <name type="scientific">Escherichia coli O157:H7</name>
    <dbReference type="NCBI Taxonomy" id="83334"/>
    <lineage>
        <taxon>Bacteria</taxon>
        <taxon>Pseudomonadati</taxon>
        <taxon>Pseudomonadota</taxon>
        <taxon>Gammaproteobacteria</taxon>
        <taxon>Enterobacterales</taxon>
        <taxon>Enterobacteriaceae</taxon>
        <taxon>Escherichia</taxon>
    </lineage>
</organism>
<reference key="1">
    <citation type="journal article" date="2001" name="Nature">
        <title>Genome sequence of enterohaemorrhagic Escherichia coli O157:H7.</title>
        <authorList>
            <person name="Perna N.T."/>
            <person name="Plunkett G. III"/>
            <person name="Burland V."/>
            <person name="Mau B."/>
            <person name="Glasner J.D."/>
            <person name="Rose D.J."/>
            <person name="Mayhew G.F."/>
            <person name="Evans P.S."/>
            <person name="Gregor J."/>
            <person name="Kirkpatrick H.A."/>
            <person name="Posfai G."/>
            <person name="Hackett J."/>
            <person name="Klink S."/>
            <person name="Boutin A."/>
            <person name="Shao Y."/>
            <person name="Miller L."/>
            <person name="Grotbeck E.J."/>
            <person name="Davis N.W."/>
            <person name="Lim A."/>
            <person name="Dimalanta E.T."/>
            <person name="Potamousis K."/>
            <person name="Apodaca J."/>
            <person name="Anantharaman T.S."/>
            <person name="Lin J."/>
            <person name="Yen G."/>
            <person name="Schwartz D.C."/>
            <person name="Welch R.A."/>
            <person name="Blattner F.R."/>
        </authorList>
    </citation>
    <scope>NUCLEOTIDE SEQUENCE [LARGE SCALE GENOMIC DNA]</scope>
    <source>
        <strain>O157:H7 / EDL933 / ATCC 700927 / EHEC</strain>
    </source>
</reference>
<reference key="2">
    <citation type="journal article" date="2001" name="DNA Res.">
        <title>Complete genome sequence of enterohemorrhagic Escherichia coli O157:H7 and genomic comparison with a laboratory strain K-12.</title>
        <authorList>
            <person name="Hayashi T."/>
            <person name="Makino K."/>
            <person name="Ohnishi M."/>
            <person name="Kurokawa K."/>
            <person name="Ishii K."/>
            <person name="Yokoyama K."/>
            <person name="Han C.-G."/>
            <person name="Ohtsubo E."/>
            <person name="Nakayama K."/>
            <person name="Murata T."/>
            <person name="Tanaka M."/>
            <person name="Tobe T."/>
            <person name="Iida T."/>
            <person name="Takami H."/>
            <person name="Honda T."/>
            <person name="Sasakawa C."/>
            <person name="Ogasawara N."/>
            <person name="Yasunaga T."/>
            <person name="Kuhara S."/>
            <person name="Shiba T."/>
            <person name="Hattori M."/>
            <person name="Shinagawa H."/>
        </authorList>
    </citation>
    <scope>NUCLEOTIDE SEQUENCE [LARGE SCALE GENOMIC DNA]</scope>
    <source>
        <strain>O157:H7 / Sakai / RIMD 0509952 / EHEC</strain>
    </source>
</reference>
<evidence type="ECO:0000255" key="1">
    <source>
        <dbReference type="HAMAP-Rule" id="MF_01497"/>
    </source>
</evidence>
<feature type="chain" id="PRO_0000209575" description="Stress response kinase A">
    <location>
        <begin position="1"/>
        <end position="328"/>
    </location>
</feature>
<feature type="active site" description="Proton acceptor" evidence="1">
    <location>
        <position position="201"/>
    </location>
</feature>
<feature type="active site" evidence="1">
    <location>
        <position position="217"/>
    </location>
</feature>
<feature type="binding site" evidence="1">
    <location>
        <position position="206"/>
    </location>
    <ligand>
        <name>Mg(2+)</name>
        <dbReference type="ChEBI" id="CHEBI:18420"/>
    </ligand>
</feature>
<feature type="binding site" evidence="1">
    <location>
        <position position="217"/>
    </location>
    <ligand>
        <name>Mg(2+)</name>
        <dbReference type="ChEBI" id="CHEBI:18420"/>
    </ligand>
</feature>
<feature type="site" description="ATP" evidence="1">
    <location>
        <position position="36"/>
    </location>
</feature>
<comment type="function">
    <text evidence="1">A protein kinase that phosphorylates Ser and Thr residues. Probably acts to suppress the effects of stress linked to accumulation of reactive oxygen species. Probably involved in the extracytoplasmic stress response.</text>
</comment>
<comment type="catalytic activity">
    <reaction evidence="1">
        <text>L-seryl-[protein] + ATP = O-phospho-L-seryl-[protein] + ADP + H(+)</text>
        <dbReference type="Rhea" id="RHEA:17989"/>
        <dbReference type="Rhea" id="RHEA-COMP:9863"/>
        <dbReference type="Rhea" id="RHEA-COMP:11604"/>
        <dbReference type="ChEBI" id="CHEBI:15378"/>
        <dbReference type="ChEBI" id="CHEBI:29999"/>
        <dbReference type="ChEBI" id="CHEBI:30616"/>
        <dbReference type="ChEBI" id="CHEBI:83421"/>
        <dbReference type="ChEBI" id="CHEBI:456216"/>
        <dbReference type="EC" id="2.7.11.1"/>
    </reaction>
</comment>
<comment type="catalytic activity">
    <reaction evidence="1">
        <text>L-threonyl-[protein] + ATP = O-phospho-L-threonyl-[protein] + ADP + H(+)</text>
        <dbReference type="Rhea" id="RHEA:46608"/>
        <dbReference type="Rhea" id="RHEA-COMP:11060"/>
        <dbReference type="Rhea" id="RHEA-COMP:11605"/>
        <dbReference type="ChEBI" id="CHEBI:15378"/>
        <dbReference type="ChEBI" id="CHEBI:30013"/>
        <dbReference type="ChEBI" id="CHEBI:30616"/>
        <dbReference type="ChEBI" id="CHEBI:61977"/>
        <dbReference type="ChEBI" id="CHEBI:456216"/>
        <dbReference type="EC" id="2.7.11.1"/>
    </reaction>
</comment>
<comment type="cofactor">
    <cofactor evidence="1">
        <name>Mg(2+)</name>
        <dbReference type="ChEBI" id="CHEBI:18420"/>
    </cofactor>
</comment>
<comment type="subunit">
    <text evidence="1">Monomer.</text>
</comment>
<comment type="subcellular location">
    <subcellularLocation>
        <location evidence="1">Cytoplasm</location>
    </subcellularLocation>
</comment>
<comment type="similarity">
    <text evidence="1">Belongs to the SrkA/RdoA protein kinase family.</text>
</comment>
<dbReference type="EC" id="2.7.11.1" evidence="1"/>
<dbReference type="EMBL" id="AE005174">
    <property type="protein sequence ID" value="AAG59048.1"/>
    <property type="molecule type" value="Genomic_DNA"/>
</dbReference>
<dbReference type="EMBL" id="BA000007">
    <property type="protein sequence ID" value="BAB38205.1"/>
    <property type="molecule type" value="Genomic_DNA"/>
</dbReference>
<dbReference type="PIR" id="D86073">
    <property type="entry name" value="D86073"/>
</dbReference>
<dbReference type="PIR" id="F91226">
    <property type="entry name" value="F91226"/>
</dbReference>
<dbReference type="RefSeq" id="NP_312809.1">
    <property type="nucleotide sequence ID" value="NC_002695.1"/>
</dbReference>
<dbReference type="RefSeq" id="WP_001065516.1">
    <property type="nucleotide sequence ID" value="NZ_VOAI01000016.1"/>
</dbReference>
<dbReference type="SMR" id="Q8X8H9"/>
<dbReference type="STRING" id="155864.Z5391"/>
<dbReference type="GeneID" id="75204339"/>
<dbReference type="GeneID" id="915109"/>
<dbReference type="KEGG" id="ece:Z5391"/>
<dbReference type="KEGG" id="ecs:ECs_4782"/>
<dbReference type="PATRIC" id="fig|386585.9.peg.4991"/>
<dbReference type="eggNOG" id="COG2334">
    <property type="taxonomic scope" value="Bacteria"/>
</dbReference>
<dbReference type="HOGENOM" id="CLU_054715_0_0_6"/>
<dbReference type="OMA" id="MHYSAWL"/>
<dbReference type="Proteomes" id="UP000000558">
    <property type="component" value="Chromosome"/>
</dbReference>
<dbReference type="Proteomes" id="UP000002519">
    <property type="component" value="Chromosome"/>
</dbReference>
<dbReference type="GO" id="GO:0005737">
    <property type="term" value="C:cytoplasm"/>
    <property type="evidence" value="ECO:0007669"/>
    <property type="project" value="UniProtKB-SubCell"/>
</dbReference>
<dbReference type="GO" id="GO:0005524">
    <property type="term" value="F:ATP binding"/>
    <property type="evidence" value="ECO:0007669"/>
    <property type="project" value="UniProtKB-UniRule"/>
</dbReference>
<dbReference type="GO" id="GO:0000287">
    <property type="term" value="F:magnesium ion binding"/>
    <property type="evidence" value="ECO:0007669"/>
    <property type="project" value="UniProtKB-UniRule"/>
</dbReference>
<dbReference type="GO" id="GO:0106310">
    <property type="term" value="F:protein serine kinase activity"/>
    <property type="evidence" value="ECO:0007669"/>
    <property type="project" value="RHEA"/>
</dbReference>
<dbReference type="GO" id="GO:0004674">
    <property type="term" value="F:protein serine/threonine kinase activity"/>
    <property type="evidence" value="ECO:0007669"/>
    <property type="project" value="UniProtKB-UniRule"/>
</dbReference>
<dbReference type="Gene3D" id="1.20.1270.170">
    <property type="match status" value="1"/>
</dbReference>
<dbReference type="Gene3D" id="3.30.200.70">
    <property type="match status" value="1"/>
</dbReference>
<dbReference type="Gene3D" id="1.10.510.10">
    <property type="entry name" value="Transferase(Phosphotransferase) domain 1"/>
    <property type="match status" value="1"/>
</dbReference>
<dbReference type="HAMAP" id="MF_01497">
    <property type="entry name" value="SrkA_kinase"/>
    <property type="match status" value="1"/>
</dbReference>
<dbReference type="InterPro" id="IPR002575">
    <property type="entry name" value="Aminoglycoside_PTrfase"/>
</dbReference>
<dbReference type="InterPro" id="IPR011009">
    <property type="entry name" value="Kinase-like_dom_sf"/>
</dbReference>
<dbReference type="InterPro" id="IPR032882">
    <property type="entry name" value="SrkA/RdoA"/>
</dbReference>
<dbReference type="NCBIfam" id="NF008738">
    <property type="entry name" value="PRK11768.1"/>
    <property type="match status" value="1"/>
</dbReference>
<dbReference type="PANTHER" id="PTHR39573">
    <property type="entry name" value="STRESS RESPONSE KINASE A"/>
    <property type="match status" value="1"/>
</dbReference>
<dbReference type="PANTHER" id="PTHR39573:SF1">
    <property type="entry name" value="STRESS RESPONSE KINASE A"/>
    <property type="match status" value="1"/>
</dbReference>
<dbReference type="Pfam" id="PF01636">
    <property type="entry name" value="APH"/>
    <property type="match status" value="1"/>
</dbReference>
<dbReference type="SUPFAM" id="SSF56112">
    <property type="entry name" value="Protein kinase-like (PK-like)"/>
    <property type="match status" value="1"/>
</dbReference>
<gene>
    <name evidence="1" type="primary">srkA</name>
    <name type="ordered locus">Z5391</name>
    <name type="ordered locus">ECs4782</name>
</gene>
<sequence>MNNSAFTFQTLHPDTIMDALFEQGIRVDSGLTPLNSYENRVYQFQDEDRRRFVVKFYRPERWTADQILEEHQFALQLVNDEVPVAAPVAFNGQTLLNHQGFYFAVFPSVGGRQFEADNIDQMEAVGRYLGRMHQTGRKQLFIHRPTIGLNEYLIEPRKLFEDATLIPSGLKAAFLKATDELIAAVTAHWREDFTVLRLHGDCHAGNILWRDGPMFVDLDDARNGPAIQDLWMLLNGDKAEQRMQLETIIEAYEEFSEFDTAEIGLIEPLRAMRLVYYLAWLMRRWADPAFPKNFPWLTGEDYWLRQTATFIEQAKVLQEPPLQLTPMY</sequence>
<proteinExistence type="inferred from homology"/>
<accession>Q8X8H9</accession>
<accession>Q7A9C9</accession>